<sequence>MRLRRKAWARPELESDPKVIYNPMQYKENWQEAFGNNHPIHLELGCGRGQFINQCAELNPHINYIAIDLYDEVLVKALRKINEKALHNVRVIPMNIAKLESIFKHDQIEKIYINFCNPWPSRRHHHKRLTHPQFLSVYKKLMKDHSEIWFKTDDDELFKDSLRYFAEEGFIEKYRTFDLHQSEFTENIKTEYEEKFSNQGVKIKFGIFEVNKG</sequence>
<gene>
    <name evidence="1" type="primary">trmB</name>
    <name type="ordered locus">Dhaf_3167</name>
</gene>
<keyword id="KW-0489">Methyltransferase</keyword>
<keyword id="KW-0949">S-adenosyl-L-methionine</keyword>
<keyword id="KW-0808">Transferase</keyword>
<keyword id="KW-0819">tRNA processing</keyword>
<comment type="function">
    <text evidence="1">Catalyzes the formation of N(7)-methylguanine at position 46 (m7G46) in tRNA.</text>
</comment>
<comment type="catalytic activity">
    <reaction evidence="1">
        <text>guanosine(46) in tRNA + S-adenosyl-L-methionine = N(7)-methylguanosine(46) in tRNA + S-adenosyl-L-homocysteine</text>
        <dbReference type="Rhea" id="RHEA:42708"/>
        <dbReference type="Rhea" id="RHEA-COMP:10188"/>
        <dbReference type="Rhea" id="RHEA-COMP:10189"/>
        <dbReference type="ChEBI" id="CHEBI:57856"/>
        <dbReference type="ChEBI" id="CHEBI:59789"/>
        <dbReference type="ChEBI" id="CHEBI:74269"/>
        <dbReference type="ChEBI" id="CHEBI:74480"/>
        <dbReference type="EC" id="2.1.1.33"/>
    </reaction>
</comment>
<comment type="pathway">
    <text evidence="1">tRNA modification; N(7)-methylguanine-tRNA biosynthesis.</text>
</comment>
<comment type="similarity">
    <text evidence="1">Belongs to the class I-like SAM-binding methyltransferase superfamily. TrmB family.</text>
</comment>
<evidence type="ECO:0000255" key="1">
    <source>
        <dbReference type="HAMAP-Rule" id="MF_01057"/>
    </source>
</evidence>
<protein>
    <recommendedName>
        <fullName evidence="1">tRNA (guanine-N(7)-)-methyltransferase</fullName>
        <ecNumber evidence="1">2.1.1.33</ecNumber>
    </recommendedName>
    <alternativeName>
        <fullName evidence="1">tRNA (guanine(46)-N(7))-methyltransferase</fullName>
    </alternativeName>
    <alternativeName>
        <fullName evidence="1">tRNA(m7G46)-methyltransferase</fullName>
    </alternativeName>
</protein>
<accession>B8G1D7</accession>
<name>TRMB_DESHD</name>
<proteinExistence type="inferred from homology"/>
<organism>
    <name type="scientific">Desulfitobacterium hafniense (strain DSM 10664 / DCB-2)</name>
    <dbReference type="NCBI Taxonomy" id="272564"/>
    <lineage>
        <taxon>Bacteria</taxon>
        <taxon>Bacillati</taxon>
        <taxon>Bacillota</taxon>
        <taxon>Clostridia</taxon>
        <taxon>Eubacteriales</taxon>
        <taxon>Desulfitobacteriaceae</taxon>
        <taxon>Desulfitobacterium</taxon>
    </lineage>
</organism>
<feature type="chain" id="PRO_1000149655" description="tRNA (guanine-N(7)-)-methyltransferase">
    <location>
        <begin position="1"/>
        <end position="213"/>
    </location>
</feature>
<feature type="binding site" evidence="1">
    <location>
        <position position="43"/>
    </location>
    <ligand>
        <name>S-adenosyl-L-methionine</name>
        <dbReference type="ChEBI" id="CHEBI:59789"/>
    </ligand>
</feature>
<feature type="binding site" evidence="1">
    <location>
        <position position="68"/>
    </location>
    <ligand>
        <name>S-adenosyl-L-methionine</name>
        <dbReference type="ChEBI" id="CHEBI:59789"/>
    </ligand>
</feature>
<feature type="binding site" evidence="1">
    <location>
        <position position="95"/>
    </location>
    <ligand>
        <name>S-adenosyl-L-methionine</name>
        <dbReference type="ChEBI" id="CHEBI:59789"/>
    </ligand>
</feature>
<feature type="binding site" evidence="1">
    <location>
        <position position="117"/>
    </location>
    <ligand>
        <name>S-adenosyl-L-methionine</name>
        <dbReference type="ChEBI" id="CHEBI:59789"/>
    </ligand>
</feature>
<feature type="binding site" evidence="1">
    <location>
        <position position="153"/>
    </location>
    <ligand>
        <name>substrate</name>
    </ligand>
</feature>
<feature type="binding site" evidence="1">
    <location>
        <begin position="190"/>
        <end position="193"/>
    </location>
    <ligand>
        <name>substrate</name>
    </ligand>
</feature>
<dbReference type="EC" id="2.1.1.33" evidence="1"/>
<dbReference type="EMBL" id="CP001336">
    <property type="protein sequence ID" value="ACL21190.1"/>
    <property type="molecule type" value="Genomic_DNA"/>
</dbReference>
<dbReference type="RefSeq" id="WP_015944441.1">
    <property type="nucleotide sequence ID" value="NC_011830.1"/>
</dbReference>
<dbReference type="SMR" id="B8G1D7"/>
<dbReference type="KEGG" id="dhd:Dhaf_3167"/>
<dbReference type="HOGENOM" id="CLU_050910_2_1_9"/>
<dbReference type="UniPathway" id="UPA00989"/>
<dbReference type="Proteomes" id="UP000007726">
    <property type="component" value="Chromosome"/>
</dbReference>
<dbReference type="GO" id="GO:0043527">
    <property type="term" value="C:tRNA methyltransferase complex"/>
    <property type="evidence" value="ECO:0007669"/>
    <property type="project" value="TreeGrafter"/>
</dbReference>
<dbReference type="GO" id="GO:0008176">
    <property type="term" value="F:tRNA (guanine(46)-N7)-methyltransferase activity"/>
    <property type="evidence" value="ECO:0007669"/>
    <property type="project" value="UniProtKB-UniRule"/>
</dbReference>
<dbReference type="CDD" id="cd02440">
    <property type="entry name" value="AdoMet_MTases"/>
    <property type="match status" value="1"/>
</dbReference>
<dbReference type="FunFam" id="3.40.50.150:FF:000035">
    <property type="entry name" value="tRNA (guanine-N(7)-)-methyltransferase"/>
    <property type="match status" value="1"/>
</dbReference>
<dbReference type="Gene3D" id="3.40.50.150">
    <property type="entry name" value="Vaccinia Virus protein VP39"/>
    <property type="match status" value="1"/>
</dbReference>
<dbReference type="HAMAP" id="MF_01057">
    <property type="entry name" value="tRNA_methyltr_TrmB"/>
    <property type="match status" value="1"/>
</dbReference>
<dbReference type="InterPro" id="IPR029063">
    <property type="entry name" value="SAM-dependent_MTases_sf"/>
</dbReference>
<dbReference type="InterPro" id="IPR003358">
    <property type="entry name" value="tRNA_(Gua-N-7)_MeTrfase_Trmb"/>
</dbReference>
<dbReference type="InterPro" id="IPR055361">
    <property type="entry name" value="tRNA_methyltr_TrmB_bact"/>
</dbReference>
<dbReference type="NCBIfam" id="NF001080">
    <property type="entry name" value="PRK00121.2-2"/>
    <property type="match status" value="1"/>
</dbReference>
<dbReference type="NCBIfam" id="TIGR00091">
    <property type="entry name" value="tRNA (guanosine(46)-N7)-methyltransferase TrmB"/>
    <property type="match status" value="1"/>
</dbReference>
<dbReference type="PANTHER" id="PTHR23417">
    <property type="entry name" value="3-DEOXY-D-MANNO-OCTULOSONIC-ACID TRANSFERASE/TRNA GUANINE-N 7 - -METHYLTRANSFERASE"/>
    <property type="match status" value="1"/>
</dbReference>
<dbReference type="PANTHER" id="PTHR23417:SF14">
    <property type="entry name" value="PENTACOTRIPEPTIDE-REPEAT REGION OF PRORP DOMAIN-CONTAINING PROTEIN"/>
    <property type="match status" value="1"/>
</dbReference>
<dbReference type="Pfam" id="PF02390">
    <property type="entry name" value="Methyltransf_4"/>
    <property type="match status" value="1"/>
</dbReference>
<dbReference type="SUPFAM" id="SSF53335">
    <property type="entry name" value="S-adenosyl-L-methionine-dependent methyltransferases"/>
    <property type="match status" value="1"/>
</dbReference>
<dbReference type="PROSITE" id="PS51625">
    <property type="entry name" value="SAM_MT_TRMB"/>
    <property type="match status" value="1"/>
</dbReference>
<reference key="1">
    <citation type="journal article" date="2012" name="BMC Microbiol.">
        <title>Genome sequence of Desulfitobacterium hafniense DCB-2, a Gram-positive anaerobe capable of dehalogenation and metal reduction.</title>
        <authorList>
            <person name="Kim S.H."/>
            <person name="Harzman C."/>
            <person name="Davis J.K."/>
            <person name="Hutcheson R."/>
            <person name="Broderick J.B."/>
            <person name="Marsh T.L."/>
            <person name="Tiedje J.M."/>
        </authorList>
    </citation>
    <scope>NUCLEOTIDE SEQUENCE [LARGE SCALE GENOMIC DNA]</scope>
    <source>
        <strain>DSM 10664 / DCB-2</strain>
    </source>
</reference>